<accession>B1IIM4</accession>
<protein>
    <recommendedName>
        <fullName evidence="1">DNA-directed RNA polymerase subunit omega</fullName>
        <shortName evidence="1">RNAP omega subunit</shortName>
        <ecNumber evidence="1">2.7.7.6</ecNumber>
    </recommendedName>
    <alternativeName>
        <fullName evidence="1">RNA polymerase omega subunit</fullName>
    </alternativeName>
    <alternativeName>
        <fullName evidence="1">Transcriptase subunit omega</fullName>
    </alternativeName>
</protein>
<feature type="chain" id="PRO_1000121203" description="DNA-directed RNA polymerase subunit omega">
    <location>
        <begin position="1"/>
        <end position="72"/>
    </location>
</feature>
<organism>
    <name type="scientific">Clostridium botulinum (strain Okra / Type B1)</name>
    <dbReference type="NCBI Taxonomy" id="498213"/>
    <lineage>
        <taxon>Bacteria</taxon>
        <taxon>Bacillati</taxon>
        <taxon>Bacillota</taxon>
        <taxon>Clostridia</taxon>
        <taxon>Eubacteriales</taxon>
        <taxon>Clostridiaceae</taxon>
        <taxon>Clostridium</taxon>
    </lineage>
</organism>
<gene>
    <name evidence="1" type="primary">rpoZ</name>
    <name type="ordered locus">CLD_2124</name>
</gene>
<keyword id="KW-0240">DNA-directed RNA polymerase</keyword>
<keyword id="KW-0548">Nucleotidyltransferase</keyword>
<keyword id="KW-0804">Transcription</keyword>
<keyword id="KW-0808">Transferase</keyword>
<sequence>MSNSMINPSIVNLLEKVDDRYSLVTITSKRSRQLIDGAKPLVDIDSTKPVTVAINEIHEGKITYKTVKEGIK</sequence>
<comment type="function">
    <text evidence="1">Promotes RNA polymerase assembly. Latches the N- and C-terminal regions of the beta' subunit thereby facilitating its interaction with the beta and alpha subunits.</text>
</comment>
<comment type="catalytic activity">
    <reaction evidence="1">
        <text>RNA(n) + a ribonucleoside 5'-triphosphate = RNA(n+1) + diphosphate</text>
        <dbReference type="Rhea" id="RHEA:21248"/>
        <dbReference type="Rhea" id="RHEA-COMP:14527"/>
        <dbReference type="Rhea" id="RHEA-COMP:17342"/>
        <dbReference type="ChEBI" id="CHEBI:33019"/>
        <dbReference type="ChEBI" id="CHEBI:61557"/>
        <dbReference type="ChEBI" id="CHEBI:140395"/>
        <dbReference type="EC" id="2.7.7.6"/>
    </reaction>
</comment>
<comment type="subunit">
    <text evidence="1">The RNAP catalytic core consists of 2 alpha, 1 beta, 1 beta' and 1 omega subunit. When a sigma factor is associated with the core the holoenzyme is formed, which can initiate transcription.</text>
</comment>
<comment type="similarity">
    <text evidence="1">Belongs to the RNA polymerase subunit omega family.</text>
</comment>
<dbReference type="EC" id="2.7.7.6" evidence="1"/>
<dbReference type="EMBL" id="CP000939">
    <property type="protein sequence ID" value="ACA44948.1"/>
    <property type="molecule type" value="Genomic_DNA"/>
</dbReference>
<dbReference type="RefSeq" id="WP_003388622.1">
    <property type="nucleotide sequence ID" value="NC_010516.1"/>
</dbReference>
<dbReference type="SMR" id="B1IIM4"/>
<dbReference type="GeneID" id="92939254"/>
<dbReference type="KEGG" id="cbb:CLD_2124"/>
<dbReference type="HOGENOM" id="CLU_125406_6_1_9"/>
<dbReference type="Proteomes" id="UP000008541">
    <property type="component" value="Chromosome"/>
</dbReference>
<dbReference type="GO" id="GO:0000428">
    <property type="term" value="C:DNA-directed RNA polymerase complex"/>
    <property type="evidence" value="ECO:0007669"/>
    <property type="project" value="UniProtKB-KW"/>
</dbReference>
<dbReference type="GO" id="GO:0003677">
    <property type="term" value="F:DNA binding"/>
    <property type="evidence" value="ECO:0007669"/>
    <property type="project" value="UniProtKB-UniRule"/>
</dbReference>
<dbReference type="GO" id="GO:0003899">
    <property type="term" value="F:DNA-directed RNA polymerase activity"/>
    <property type="evidence" value="ECO:0007669"/>
    <property type="project" value="UniProtKB-UniRule"/>
</dbReference>
<dbReference type="GO" id="GO:0006351">
    <property type="term" value="P:DNA-templated transcription"/>
    <property type="evidence" value="ECO:0007669"/>
    <property type="project" value="UniProtKB-UniRule"/>
</dbReference>
<dbReference type="Gene3D" id="3.90.940.10">
    <property type="match status" value="1"/>
</dbReference>
<dbReference type="HAMAP" id="MF_00366">
    <property type="entry name" value="RNApol_bact_RpoZ"/>
    <property type="match status" value="1"/>
</dbReference>
<dbReference type="InterPro" id="IPR003716">
    <property type="entry name" value="DNA-dir_RNA_pol_omega"/>
</dbReference>
<dbReference type="InterPro" id="IPR006110">
    <property type="entry name" value="Pol_omega/Rpo6/RPB6"/>
</dbReference>
<dbReference type="InterPro" id="IPR036161">
    <property type="entry name" value="RPB6/omega-like_sf"/>
</dbReference>
<dbReference type="NCBIfam" id="TIGR00690">
    <property type="entry name" value="rpoZ"/>
    <property type="match status" value="1"/>
</dbReference>
<dbReference type="PANTHER" id="PTHR34476">
    <property type="entry name" value="DNA-DIRECTED RNA POLYMERASE SUBUNIT OMEGA"/>
    <property type="match status" value="1"/>
</dbReference>
<dbReference type="PANTHER" id="PTHR34476:SF1">
    <property type="entry name" value="DNA-DIRECTED RNA POLYMERASE SUBUNIT OMEGA"/>
    <property type="match status" value="1"/>
</dbReference>
<dbReference type="Pfam" id="PF01192">
    <property type="entry name" value="RNA_pol_Rpb6"/>
    <property type="match status" value="1"/>
</dbReference>
<dbReference type="SMART" id="SM01409">
    <property type="entry name" value="RNA_pol_Rpb6"/>
    <property type="match status" value="1"/>
</dbReference>
<dbReference type="SUPFAM" id="SSF63562">
    <property type="entry name" value="RPB6/omega subunit-like"/>
    <property type="match status" value="1"/>
</dbReference>
<evidence type="ECO:0000255" key="1">
    <source>
        <dbReference type="HAMAP-Rule" id="MF_00366"/>
    </source>
</evidence>
<name>RPOZ_CLOBK</name>
<proteinExistence type="inferred from homology"/>
<reference key="1">
    <citation type="journal article" date="2007" name="PLoS ONE">
        <title>Analysis of the neurotoxin complex genes in Clostridium botulinum A1-A4 and B1 strains: BoNT/A3, /Ba4 and /B1 clusters are located within plasmids.</title>
        <authorList>
            <person name="Smith T.J."/>
            <person name="Hill K.K."/>
            <person name="Foley B.T."/>
            <person name="Detter J.C."/>
            <person name="Munk A.C."/>
            <person name="Bruce D.C."/>
            <person name="Doggett N.A."/>
            <person name="Smith L.A."/>
            <person name="Marks J.D."/>
            <person name="Xie G."/>
            <person name="Brettin T.S."/>
        </authorList>
    </citation>
    <scope>NUCLEOTIDE SEQUENCE [LARGE SCALE GENOMIC DNA]</scope>
    <source>
        <strain>Okra / Type B1</strain>
    </source>
</reference>